<comment type="function">
    <text evidence="1">Acts as a receptor histidine kinase for a signal transduction pathway. This protein undergoes an ATP-dependent autophosphorylation at a conserved histidine residue in the kinase core, and a phosphoryl group is then transferred to a conserved aspartate residue in the receiver domain (By similarity).</text>
</comment>
<comment type="catalytic activity">
    <reaction>
        <text>ATP + protein L-histidine = ADP + protein N-phospho-L-histidine.</text>
        <dbReference type="EC" id="2.7.13.3"/>
    </reaction>
</comment>
<comment type="domain">
    <text>Atypical domain architecture: contains 12 HAMP domains and two receiver domains.</text>
</comment>
<comment type="PTM">
    <text evidence="1">Activation probably requires transfer of a phosphate group between a histidine in the kinase core (transmitter) domain and an aspartate of the receiver domain.</text>
</comment>
<gene>
    <name type="primary">dhkJ</name>
    <name type="ORF">DDB_G0277883</name>
</gene>
<organism>
    <name type="scientific">Dictyostelium discoideum</name>
    <name type="common">Social amoeba</name>
    <dbReference type="NCBI Taxonomy" id="44689"/>
    <lineage>
        <taxon>Eukaryota</taxon>
        <taxon>Amoebozoa</taxon>
        <taxon>Evosea</taxon>
        <taxon>Eumycetozoa</taxon>
        <taxon>Dictyostelia</taxon>
        <taxon>Dictyosteliales</taxon>
        <taxon>Dictyosteliaceae</taxon>
        <taxon>Dictyostelium</taxon>
    </lineage>
</organism>
<accession>Q54YZ9</accession>
<accession>Q95PH6</accession>
<feature type="chain" id="PRO_0000328340" description="Hybrid signal transduction histidine kinase J">
    <location>
        <begin position="1"/>
        <end position="2062"/>
    </location>
</feature>
<feature type="domain" description="HAMP 1" evidence="2">
    <location>
        <begin position="259"/>
        <end position="317"/>
    </location>
</feature>
<feature type="domain" description="HAMP 2" evidence="2">
    <location>
        <begin position="357"/>
        <end position="409"/>
    </location>
</feature>
<feature type="domain" description="HAMP 3" evidence="2">
    <location>
        <begin position="449"/>
        <end position="501"/>
    </location>
</feature>
<feature type="domain" description="HAMP 4" evidence="2">
    <location>
        <begin position="541"/>
        <end position="593"/>
    </location>
</feature>
<feature type="domain" description="HAMP 5" evidence="2">
    <location>
        <begin position="633"/>
        <end position="685"/>
    </location>
</feature>
<feature type="domain" description="HAMP 6" evidence="2">
    <location>
        <begin position="725"/>
        <end position="777"/>
    </location>
</feature>
<feature type="domain" description="HAMP 7" evidence="2">
    <location>
        <begin position="819"/>
        <end position="871"/>
    </location>
</feature>
<feature type="domain" description="HAMP 8" evidence="2">
    <location>
        <begin position="911"/>
        <end position="963"/>
    </location>
</feature>
<feature type="domain" description="HAMP 9" evidence="2">
    <location>
        <begin position="1003"/>
        <end position="1055"/>
    </location>
</feature>
<feature type="domain" description="HAMP 10" evidence="2">
    <location>
        <begin position="1095"/>
        <end position="1147"/>
    </location>
</feature>
<feature type="domain" description="HAMP 11" evidence="2">
    <location>
        <begin position="1187"/>
        <end position="1239"/>
    </location>
</feature>
<feature type="domain" description="HAMP 12" evidence="2">
    <location>
        <begin position="1279"/>
        <end position="1331"/>
    </location>
</feature>
<feature type="domain" description="Histidine kinase" evidence="3">
    <location>
        <begin position="1353"/>
        <end position="1575"/>
    </location>
</feature>
<feature type="domain" description="Response regulatory 1" evidence="4">
    <location>
        <begin position="1590"/>
        <end position="1708"/>
    </location>
</feature>
<feature type="domain" description="Response regulatory 2" evidence="4">
    <location>
        <begin position="1730"/>
        <end position="1848"/>
    </location>
</feature>
<feature type="region of interest" description="Disordered" evidence="5">
    <location>
        <begin position="64"/>
        <end position="88"/>
    </location>
</feature>
<feature type="region of interest" description="Disordered" evidence="5">
    <location>
        <begin position="120"/>
        <end position="165"/>
    </location>
</feature>
<feature type="region of interest" description="Disordered" evidence="5">
    <location>
        <begin position="1877"/>
        <end position="2062"/>
    </location>
</feature>
<feature type="compositionally biased region" description="Low complexity" evidence="5">
    <location>
        <begin position="64"/>
        <end position="85"/>
    </location>
</feature>
<feature type="compositionally biased region" description="Low complexity" evidence="5">
    <location>
        <begin position="123"/>
        <end position="163"/>
    </location>
</feature>
<feature type="compositionally biased region" description="Low complexity" evidence="5">
    <location>
        <begin position="1882"/>
        <end position="1893"/>
    </location>
</feature>
<feature type="compositionally biased region" description="Basic and acidic residues" evidence="5">
    <location>
        <begin position="1903"/>
        <end position="1920"/>
    </location>
</feature>
<feature type="compositionally biased region" description="Low complexity" evidence="5">
    <location>
        <begin position="1921"/>
        <end position="1941"/>
    </location>
</feature>
<feature type="compositionally biased region" description="Basic and acidic residues" evidence="5">
    <location>
        <begin position="1967"/>
        <end position="1978"/>
    </location>
</feature>
<feature type="compositionally biased region" description="Low complexity" evidence="5">
    <location>
        <begin position="2008"/>
        <end position="2021"/>
    </location>
</feature>
<feature type="compositionally biased region" description="Polar residues" evidence="5">
    <location>
        <begin position="2022"/>
        <end position="2037"/>
    </location>
</feature>
<feature type="compositionally biased region" description="Polar residues" evidence="5">
    <location>
        <begin position="2047"/>
        <end position="2062"/>
    </location>
</feature>
<feature type="modified residue" description="Phosphohistidine; by autocatalysis" evidence="3">
    <location>
        <position position="1356"/>
    </location>
</feature>
<feature type="modified residue" description="4-aspartylphosphate" evidence="4">
    <location>
        <position position="1644"/>
    </location>
</feature>
<feature type="modified residue" description="4-aspartylphosphate" evidence="4">
    <location>
        <position position="1779"/>
    </location>
</feature>
<feature type="sequence conflict" description="In Ref. 1; AAK54091." evidence="6" ref="1">
    <original>E</original>
    <variation>D</variation>
    <location>
        <position position="2"/>
    </location>
</feature>
<feature type="sequence conflict" description="In Ref. 1; AAK54091." evidence="6" ref="1">
    <original>E</original>
    <variation>G</variation>
    <location>
        <position position="7"/>
    </location>
</feature>
<feature type="sequence conflict" description="In Ref. 1; AAK54091." evidence="6" ref="1">
    <original>N</original>
    <variation>T</variation>
    <location>
        <position position="10"/>
    </location>
</feature>
<feature type="sequence conflict" description="In Ref. 1; AAK54091." evidence="6" ref="1">
    <original>NL</original>
    <variation>KF</variation>
    <location>
        <begin position="1188"/>
        <end position="1189"/>
    </location>
</feature>
<feature type="sequence conflict" description="In Ref. 1; AAK54091." evidence="6" ref="1">
    <original>T</original>
    <variation>P</variation>
    <location>
        <position position="1330"/>
    </location>
</feature>
<feature type="sequence conflict" description="In Ref. 1; AAK54091." evidence="6" ref="1">
    <original>S</original>
    <variation>F</variation>
    <location>
        <position position="2025"/>
    </location>
</feature>
<evidence type="ECO:0000250" key="1"/>
<evidence type="ECO:0000255" key="2">
    <source>
        <dbReference type="PROSITE-ProRule" id="PRU00102"/>
    </source>
</evidence>
<evidence type="ECO:0000255" key="3">
    <source>
        <dbReference type="PROSITE-ProRule" id="PRU00107"/>
    </source>
</evidence>
<evidence type="ECO:0000255" key="4">
    <source>
        <dbReference type="PROSITE-ProRule" id="PRU00169"/>
    </source>
</evidence>
<evidence type="ECO:0000256" key="5">
    <source>
        <dbReference type="SAM" id="MobiDB-lite"/>
    </source>
</evidence>
<evidence type="ECO:0000305" key="6"/>
<proteinExistence type="inferred from homology"/>
<reference key="1">
    <citation type="book" date="2001" name="Histidine kinases in signal transduction">
        <title>The histidine kinases of Dictyostelium.</title>
        <editorList>
            <person name="Inouye M."/>
            <person name="Dutta R."/>
        </editorList>
        <authorList>
            <person name="Anjard C."/>
            <person name="Loomis W.F."/>
        </authorList>
    </citation>
    <scope>NUCLEOTIDE SEQUENCE [GENOMIC DNA]</scope>
    <source>
        <strain>AX4</strain>
    </source>
</reference>
<reference key="2">
    <citation type="journal article" date="2005" name="Nature">
        <title>The genome of the social amoeba Dictyostelium discoideum.</title>
        <authorList>
            <person name="Eichinger L."/>
            <person name="Pachebat J.A."/>
            <person name="Gloeckner G."/>
            <person name="Rajandream M.A."/>
            <person name="Sucgang R."/>
            <person name="Berriman M."/>
            <person name="Song J."/>
            <person name="Olsen R."/>
            <person name="Szafranski K."/>
            <person name="Xu Q."/>
            <person name="Tunggal B."/>
            <person name="Kummerfeld S."/>
            <person name="Madera M."/>
            <person name="Konfortov B.A."/>
            <person name="Rivero F."/>
            <person name="Bankier A.T."/>
            <person name="Lehmann R."/>
            <person name="Hamlin N."/>
            <person name="Davies R."/>
            <person name="Gaudet P."/>
            <person name="Fey P."/>
            <person name="Pilcher K."/>
            <person name="Chen G."/>
            <person name="Saunders D."/>
            <person name="Sodergren E.J."/>
            <person name="Davis P."/>
            <person name="Kerhornou A."/>
            <person name="Nie X."/>
            <person name="Hall N."/>
            <person name="Anjard C."/>
            <person name="Hemphill L."/>
            <person name="Bason N."/>
            <person name="Farbrother P."/>
            <person name="Desany B."/>
            <person name="Just E."/>
            <person name="Morio T."/>
            <person name="Rost R."/>
            <person name="Churcher C.M."/>
            <person name="Cooper J."/>
            <person name="Haydock S."/>
            <person name="van Driessche N."/>
            <person name="Cronin A."/>
            <person name="Goodhead I."/>
            <person name="Muzny D.M."/>
            <person name="Mourier T."/>
            <person name="Pain A."/>
            <person name="Lu M."/>
            <person name="Harper D."/>
            <person name="Lindsay R."/>
            <person name="Hauser H."/>
            <person name="James K.D."/>
            <person name="Quiles M."/>
            <person name="Madan Babu M."/>
            <person name="Saito T."/>
            <person name="Buchrieser C."/>
            <person name="Wardroper A."/>
            <person name="Felder M."/>
            <person name="Thangavelu M."/>
            <person name="Johnson D."/>
            <person name="Knights A."/>
            <person name="Loulseged H."/>
            <person name="Mungall K.L."/>
            <person name="Oliver K."/>
            <person name="Price C."/>
            <person name="Quail M.A."/>
            <person name="Urushihara H."/>
            <person name="Hernandez J."/>
            <person name="Rabbinowitsch E."/>
            <person name="Steffen D."/>
            <person name="Sanders M."/>
            <person name="Ma J."/>
            <person name="Kohara Y."/>
            <person name="Sharp S."/>
            <person name="Simmonds M.N."/>
            <person name="Spiegler S."/>
            <person name="Tivey A."/>
            <person name="Sugano S."/>
            <person name="White B."/>
            <person name="Walker D."/>
            <person name="Woodward J.R."/>
            <person name="Winckler T."/>
            <person name="Tanaka Y."/>
            <person name="Shaulsky G."/>
            <person name="Schleicher M."/>
            <person name="Weinstock G.M."/>
            <person name="Rosenthal A."/>
            <person name="Cox E.C."/>
            <person name="Chisholm R.L."/>
            <person name="Gibbs R.A."/>
            <person name="Loomis W.F."/>
            <person name="Platzer M."/>
            <person name="Kay R.R."/>
            <person name="Williams J.G."/>
            <person name="Dear P.H."/>
            <person name="Noegel A.A."/>
            <person name="Barrell B.G."/>
            <person name="Kuspa A."/>
        </authorList>
    </citation>
    <scope>NUCLEOTIDE SEQUENCE [LARGE SCALE GENOMIC DNA]</scope>
    <source>
        <strain>AX4</strain>
    </source>
</reference>
<name>DHKJ_DICDI</name>
<protein>
    <recommendedName>
        <fullName>Hybrid signal transduction histidine kinase J</fullName>
        <ecNumber>2.7.13.3</ecNumber>
    </recommendedName>
</protein>
<keyword id="KW-0067">ATP-binding</keyword>
<keyword id="KW-0418">Kinase</keyword>
<keyword id="KW-0547">Nucleotide-binding</keyword>
<keyword id="KW-0597">Phosphoprotein</keyword>
<keyword id="KW-1185">Reference proteome</keyword>
<keyword id="KW-0677">Repeat</keyword>
<keyword id="KW-0807">Transducer</keyword>
<keyword id="KW-0808">Transferase</keyword>
<keyword id="KW-0902">Two-component regulatory system</keyword>
<sequence length="2062" mass="224160">MELELDELLNQCIHCCPHCKNKISISQLSACNLIKNRFYELNNKYNNFKNNNIYDIDCNNNSNLNNTNNNNNNNNNNDNNNSNNSFRNILNKDKDITNNNSHFNISDSFINFNNKIKNKSNKIKNGGNNNNNNNNNNNNNNNNNNNNNNNNNNNNNNNNNNNGESYNLFLDSLLKSLETVKGGDFKSRVKSNEQLFTEKENKIISTYNEILNFQDSTVTEFKRIEKQVGKEGNVMSRAFLPNAVGSWEFCIEFVNNLIGDMIQPTEEVIKVITSVARGDLSQTINLELGQGRKLTGEFLRIAKVVNTMVSQLNSFSSEVTRVAREVGTDGKLGGQAVVTGVDGIWKDLTDNVNTMAANLTGQVREIALVTTAVATGDLSKKITLDVKGEIQELKLTINTMVDQLKSFSSEVTRVSREVGTEGILGGQAQVKGVDGVWKDLTDNVNTMAANLTGQVRSIAEVTTAVAEGDLSKNITIDAQGEILQLKNTINTMVQQLKGFSSEVTRVAREVGTKGILGGQAEVTGVGGVWKGLTDNVNTMAANLTGQVRSIAEVTTAVAKGDLSKNITIDAQGEILQLKNTINTMVDQLKSFSSEVTRVSREVGTEGILGGQAEVTGVDGVWKGLTDNVNTMAANLTGQVRSIAEVTTAVAKGDLSKNITIDAQGEILQLKNTINTMVQQLKSFSSEVTRVSREVGTEGILGGQAQVEGVGGVWKDLTDNVNTMAANLTGQVRSIAEVTTAVACGDLSKNITIDAEGEILQLKNTINTMVDQLKSFSSEVTRVAREVGTEGILGGQAQVEGLGVGGVWKDLTDNVNTMAANLTGQVRSIAEVTTAVAEGDLSKQVSINAQGEILQLKNTINTMVDQLKSFSSEVTRVSREVGTEGILGGQAQVKGVGGVWKDLTENVNTMAANLTGQVRSIAEVTTAVACGDLSKNITIDAKGEILQLKNTINTMVQQLKGFSSEVTRVSREVGTEGILGGQAQVEGVGGVWKDLTDNVNTMAANLTGQVRSIAEVTTAVACGDLSKKISIDAQGEICELKNTINTMVDQLKSFSSEVTRVAREVGTEGILGGQAEVKDVGGVWKGLTDNVNTMAANLTGQVRSIAEVTTAVACGDLSKKISIDVRGEFLELKITINTMVDLLNSFSSEVTRVALEVGTEGILGGQAQVEGVDGVWKYLTQNVNTMAANLTSQVREIANVTTAVANGDLSKKVNLDVRGEILQLKITINTMVDQLNSFSSEVTRVAREVGTEGMLGGQAQVEGVGGVWKDLTDNVNTMAANLTTQVRSIAEIAKAVTKGDFTRVISVDAKGEVNLLKLIINEMIHNLKETTLKNTLAKETAEAASRAKSDFMANMSHEIRTPMNGIIGMTDLTLDTELTAEQREYLSMVQSSAGSLLTIINDILDFSKIEAGRLELDQAEFSLRAHLYDALKTLSWRAHQKCIELVCDIASDVPDSLIGDPGRLRQIVNNLVGNAIKFTSQGEVDLVVKVEKSLSCGEVVLKFSVIDTGIGIPKDKLHLIFEAFSQADGSITRRYGGTGLGLTISTRLVELMKGKLSVVSKSGKGSTFEFTAQFPTSPNQLPLTEKLNDVHTLIVDDNKSTLKVLKQILSEFGITSEVSNNTQDAFNMIVKATKTTKPFEFIFVDAQLGTSLIDMMVEKNMNHCKTKIIMLISGGGQRGYPDSSSNFITGYLSKPVSPSEIFDILTRQGITRQIPKQLCKKIQLTSEIFGDILLAEDNAVNQRLAIRLLEKFGHRVQLAENGLQAVASSQLRKFDLILMDVQMPHCGGFEATAQIRKREHEQGIHTPIIAMTAHALARDRVKCLEAGMDDYISKPINPDQLKAMIEKYLFISKSCNSYEQFQQLQAQKSANYINSTSYYGQLTPTTTTTTTTTTALPSPQKILSIEDDKNLNSNDNNEKDNNNQNNNNNQNDNNKNDNNQNDFDQIKTISNNKESGVGENKKTTRNTSDNERIPKKSDMFDGDFVVQPQLVNRSSSNNKKSNDINGKPQQSQQQPHQQEQQQDIYSSKHQQQSNSPPLANTKRKENDLSNSSIPASKKNNTKQ</sequence>
<dbReference type="EC" id="2.7.13.3"/>
<dbReference type="EMBL" id="AF362372">
    <property type="protein sequence ID" value="AAK54091.2"/>
    <property type="molecule type" value="Genomic_DNA"/>
</dbReference>
<dbReference type="EMBL" id="AAFI02000023">
    <property type="protein sequence ID" value="EAL68114.2"/>
    <property type="molecule type" value="Genomic_DNA"/>
</dbReference>
<dbReference type="RefSeq" id="XP_642053.2">
    <property type="nucleotide sequence ID" value="XM_636961.2"/>
</dbReference>
<dbReference type="SMR" id="Q54YZ9"/>
<dbReference type="STRING" id="44689.Q54YZ9"/>
<dbReference type="PaxDb" id="44689-DDB0215385"/>
<dbReference type="EnsemblProtists" id="EAL68114">
    <property type="protein sequence ID" value="EAL68114"/>
    <property type="gene ID" value="DDB_G0277883"/>
</dbReference>
<dbReference type="GeneID" id="8621265"/>
<dbReference type="KEGG" id="ddi:DDB_G0277883"/>
<dbReference type="dictyBase" id="DDB_G0277883">
    <property type="gene designation" value="dhkJ"/>
</dbReference>
<dbReference type="VEuPathDB" id="AmoebaDB:DDB_G0277883"/>
<dbReference type="eggNOG" id="KOG0519">
    <property type="taxonomic scope" value="Eukaryota"/>
</dbReference>
<dbReference type="HOGENOM" id="CLU_000445_3_0_1"/>
<dbReference type="InParanoid" id="Q54YZ9"/>
<dbReference type="OMA" id="DMLGWTV"/>
<dbReference type="PhylomeDB" id="Q54YZ9"/>
<dbReference type="PRO" id="PR:Q54YZ9"/>
<dbReference type="Proteomes" id="UP000002195">
    <property type="component" value="Chromosome 3"/>
</dbReference>
<dbReference type="GO" id="GO:0016020">
    <property type="term" value="C:membrane"/>
    <property type="evidence" value="ECO:0007669"/>
    <property type="project" value="InterPro"/>
</dbReference>
<dbReference type="GO" id="GO:0005524">
    <property type="term" value="F:ATP binding"/>
    <property type="evidence" value="ECO:0007669"/>
    <property type="project" value="UniProtKB-KW"/>
</dbReference>
<dbReference type="GO" id="GO:0000155">
    <property type="term" value="F:phosphorelay sensor kinase activity"/>
    <property type="evidence" value="ECO:0007669"/>
    <property type="project" value="InterPro"/>
</dbReference>
<dbReference type="GO" id="GO:0004673">
    <property type="term" value="F:protein histidine kinase activity"/>
    <property type="evidence" value="ECO:0000318"/>
    <property type="project" value="GO_Central"/>
</dbReference>
<dbReference type="GO" id="GO:0071474">
    <property type="term" value="P:cellular hyperosmotic response"/>
    <property type="evidence" value="ECO:0000318"/>
    <property type="project" value="GO_Central"/>
</dbReference>
<dbReference type="CDD" id="cd06225">
    <property type="entry name" value="HAMP"/>
    <property type="match status" value="11"/>
</dbReference>
<dbReference type="CDD" id="cd16922">
    <property type="entry name" value="HATPase_EvgS-ArcB-TorS-like"/>
    <property type="match status" value="1"/>
</dbReference>
<dbReference type="CDD" id="cd00082">
    <property type="entry name" value="HisKA"/>
    <property type="match status" value="1"/>
</dbReference>
<dbReference type="CDD" id="cd17546">
    <property type="entry name" value="REC_hyHK_CKI1_RcsC-like"/>
    <property type="match status" value="1"/>
</dbReference>
<dbReference type="FunFam" id="3.40.50.2300:FF:001026">
    <property type="match status" value="1"/>
</dbReference>
<dbReference type="FunFam" id="3.40.50.2300:FF:001043">
    <property type="match status" value="1"/>
</dbReference>
<dbReference type="FunFam" id="3.30.565.10:FF:000010">
    <property type="entry name" value="Sensor histidine kinase RcsC"/>
    <property type="match status" value="1"/>
</dbReference>
<dbReference type="FunFam" id="1.10.287.130:FF:000002">
    <property type="entry name" value="Two-component osmosensing histidine kinase"/>
    <property type="match status" value="1"/>
</dbReference>
<dbReference type="FunFam" id="1.20.120.1530:FF:000002">
    <property type="entry name" value="Two-component osmosensing histidine kinase"/>
    <property type="match status" value="9"/>
</dbReference>
<dbReference type="Gene3D" id="1.10.287.130">
    <property type="match status" value="1"/>
</dbReference>
<dbReference type="Gene3D" id="1.20.120.1530">
    <property type="match status" value="7"/>
</dbReference>
<dbReference type="Gene3D" id="3.40.50.2300">
    <property type="match status" value="2"/>
</dbReference>
<dbReference type="Gene3D" id="1.10.8.500">
    <property type="entry name" value="HAMP domain in histidine kinase"/>
    <property type="match status" value="2"/>
</dbReference>
<dbReference type="Gene3D" id="3.30.565.10">
    <property type="entry name" value="Histidine kinase-like ATPase, C-terminal domain"/>
    <property type="match status" value="1"/>
</dbReference>
<dbReference type="InterPro" id="IPR011006">
    <property type="entry name" value="CheY-like_superfamily"/>
</dbReference>
<dbReference type="InterPro" id="IPR003660">
    <property type="entry name" value="HAMP_dom"/>
</dbReference>
<dbReference type="InterPro" id="IPR036890">
    <property type="entry name" value="HATPase_C_sf"/>
</dbReference>
<dbReference type="InterPro" id="IPR005467">
    <property type="entry name" value="His_kinase_dom"/>
</dbReference>
<dbReference type="InterPro" id="IPR003661">
    <property type="entry name" value="HisK_dim/P_dom"/>
</dbReference>
<dbReference type="InterPro" id="IPR036097">
    <property type="entry name" value="HisK_dim/P_sf"/>
</dbReference>
<dbReference type="InterPro" id="IPR004358">
    <property type="entry name" value="Sig_transdc_His_kin-like_C"/>
</dbReference>
<dbReference type="InterPro" id="IPR001789">
    <property type="entry name" value="Sig_transdc_resp-reg_receiver"/>
</dbReference>
<dbReference type="PANTHER" id="PTHR45339">
    <property type="entry name" value="HYBRID SIGNAL TRANSDUCTION HISTIDINE KINASE J"/>
    <property type="match status" value="1"/>
</dbReference>
<dbReference type="PANTHER" id="PTHR45339:SF1">
    <property type="entry name" value="HYBRID SIGNAL TRANSDUCTION HISTIDINE KINASE J"/>
    <property type="match status" value="1"/>
</dbReference>
<dbReference type="Pfam" id="PF00672">
    <property type="entry name" value="HAMP"/>
    <property type="match status" value="7"/>
</dbReference>
<dbReference type="Pfam" id="PF18947">
    <property type="entry name" value="HAMP_2"/>
    <property type="match status" value="5"/>
</dbReference>
<dbReference type="Pfam" id="PF02518">
    <property type="entry name" value="HATPase_c"/>
    <property type="match status" value="1"/>
</dbReference>
<dbReference type="Pfam" id="PF00512">
    <property type="entry name" value="HisKA"/>
    <property type="match status" value="1"/>
</dbReference>
<dbReference type="Pfam" id="PF00072">
    <property type="entry name" value="Response_reg"/>
    <property type="match status" value="1"/>
</dbReference>
<dbReference type="PRINTS" id="PR00344">
    <property type="entry name" value="BCTRLSENSOR"/>
</dbReference>
<dbReference type="SMART" id="SM00304">
    <property type="entry name" value="HAMP"/>
    <property type="match status" value="12"/>
</dbReference>
<dbReference type="SMART" id="SM00387">
    <property type="entry name" value="HATPase_c"/>
    <property type="match status" value="1"/>
</dbReference>
<dbReference type="SMART" id="SM00388">
    <property type="entry name" value="HisKA"/>
    <property type="match status" value="1"/>
</dbReference>
<dbReference type="SMART" id="SM00448">
    <property type="entry name" value="REC"/>
    <property type="match status" value="2"/>
</dbReference>
<dbReference type="SUPFAM" id="SSF55874">
    <property type="entry name" value="ATPase domain of HSP90 chaperone/DNA topoisomerase II/histidine kinase"/>
    <property type="match status" value="1"/>
</dbReference>
<dbReference type="SUPFAM" id="SSF52172">
    <property type="entry name" value="CheY-like"/>
    <property type="match status" value="2"/>
</dbReference>
<dbReference type="SUPFAM" id="SSF158472">
    <property type="entry name" value="HAMP domain-like"/>
    <property type="match status" value="1"/>
</dbReference>
<dbReference type="SUPFAM" id="SSF47384">
    <property type="entry name" value="Homodimeric domain of signal transducing histidine kinase"/>
    <property type="match status" value="1"/>
</dbReference>
<dbReference type="SUPFAM" id="SSF58104">
    <property type="entry name" value="Methyl-accepting chemotaxis protein (MCP) signaling domain"/>
    <property type="match status" value="4"/>
</dbReference>
<dbReference type="PROSITE" id="PS50885">
    <property type="entry name" value="HAMP"/>
    <property type="match status" value="12"/>
</dbReference>
<dbReference type="PROSITE" id="PS50109">
    <property type="entry name" value="HIS_KIN"/>
    <property type="match status" value="1"/>
</dbReference>
<dbReference type="PROSITE" id="PS50110">
    <property type="entry name" value="RESPONSE_REGULATORY"/>
    <property type="match status" value="2"/>
</dbReference>